<reference key="1">
    <citation type="journal article" date="1999" name="Nature">
        <title>Sequence and analysis of chromosome 2 of the plant Arabidopsis thaliana.</title>
        <authorList>
            <person name="Lin X."/>
            <person name="Kaul S."/>
            <person name="Rounsley S.D."/>
            <person name="Shea T.P."/>
            <person name="Benito M.-I."/>
            <person name="Town C.D."/>
            <person name="Fujii C.Y."/>
            <person name="Mason T.M."/>
            <person name="Bowman C.L."/>
            <person name="Barnstead M.E."/>
            <person name="Feldblyum T.V."/>
            <person name="Buell C.R."/>
            <person name="Ketchum K.A."/>
            <person name="Lee J.J."/>
            <person name="Ronning C.M."/>
            <person name="Koo H.L."/>
            <person name="Moffat K.S."/>
            <person name="Cronin L.A."/>
            <person name="Shen M."/>
            <person name="Pai G."/>
            <person name="Van Aken S."/>
            <person name="Umayam L."/>
            <person name="Tallon L.J."/>
            <person name="Gill J.E."/>
            <person name="Adams M.D."/>
            <person name="Carrera A.J."/>
            <person name="Creasy T.H."/>
            <person name="Goodman H.M."/>
            <person name="Somerville C.R."/>
            <person name="Copenhaver G.P."/>
            <person name="Preuss D."/>
            <person name="Nierman W.C."/>
            <person name="White O."/>
            <person name="Eisen J.A."/>
            <person name="Salzberg S.L."/>
            <person name="Fraser C.M."/>
            <person name="Venter J.C."/>
        </authorList>
    </citation>
    <scope>NUCLEOTIDE SEQUENCE [LARGE SCALE GENOMIC DNA]</scope>
    <source>
        <strain>cv. Columbia</strain>
    </source>
</reference>
<reference key="2">
    <citation type="journal article" date="2017" name="Plant J.">
        <title>Araport11: a complete reannotation of the Arabidopsis thaliana reference genome.</title>
        <authorList>
            <person name="Cheng C.Y."/>
            <person name="Krishnakumar V."/>
            <person name="Chan A.P."/>
            <person name="Thibaud-Nissen F."/>
            <person name="Schobel S."/>
            <person name="Town C.D."/>
        </authorList>
    </citation>
    <scope>GENOME REANNOTATION</scope>
    <source>
        <strain>cv. Columbia</strain>
    </source>
</reference>
<reference key="3">
    <citation type="journal article" date="2002" name="Plant Physiol.">
        <title>Cloning and sequencing of cDNAs for hypothetical genes from chromosome 2 of Arabidopsis.</title>
        <authorList>
            <person name="Xiao Y.-L."/>
            <person name="Malik M."/>
            <person name="Whitelaw C.A."/>
            <person name="Town C.D."/>
        </authorList>
    </citation>
    <scope>NUCLEOTIDE SEQUENCE [LARGE SCALE MRNA] (ISOFORMS 1 AND 2)</scope>
    <source>
        <strain>cv. Columbia</strain>
    </source>
</reference>
<reference key="4">
    <citation type="journal article" date="2005" name="Plant Physiol.">
        <title>Analysis of the cDNAs of hypothetical genes on Arabidopsis chromosome 2 reveals numerous transcript variants.</title>
        <authorList>
            <person name="Xiao Y.-L."/>
            <person name="Smith S.R."/>
            <person name="Ishmael N."/>
            <person name="Redman J.C."/>
            <person name="Kumar N."/>
            <person name="Monaghan E.L."/>
            <person name="Ayele M."/>
            <person name="Haas B.J."/>
            <person name="Wu H.C."/>
            <person name="Town C.D."/>
        </authorList>
    </citation>
    <scope>NUCLEOTIDE SEQUENCE [LARGE SCALE MRNA] (ISOFORMS 1 AND 2)</scope>
    <source>
        <strain>cv. Columbia</strain>
    </source>
</reference>
<reference key="5">
    <citation type="submission" date="2004-06" db="EMBL/GenBank/DDBJ databases">
        <authorList>
            <person name="Underwood B.A."/>
            <person name="Xiao Y.-L."/>
            <person name="Moskal W.A. Jr."/>
            <person name="Monaghan E.L."/>
            <person name="Wang W."/>
            <person name="Redman J.C."/>
            <person name="Wu H.C."/>
            <person name="Utterback T."/>
            <person name="Town C.D."/>
        </authorList>
    </citation>
    <scope>NUCLEOTIDE SEQUENCE [LARGE SCALE MRNA] (ISOFORM 1)</scope>
    <source>
        <strain>cv. Columbia</strain>
    </source>
</reference>
<reference key="6">
    <citation type="journal article" date="2007" name="FEBS Lett.">
        <title>Reticulon-like proteins in Arabidopsis thaliana: structural organization and ER localization.</title>
        <authorList>
            <person name="Nziengui H."/>
            <person name="Bouhidel K."/>
            <person name="Pillon D."/>
            <person name="Der C."/>
            <person name="Marty F."/>
            <person name="Schoefs B."/>
        </authorList>
    </citation>
    <scope>GENE FAMILY</scope>
    <scope>NOMENCLATURE</scope>
</reference>
<evidence type="ECO:0000250" key="1"/>
<evidence type="ECO:0000255" key="2"/>
<evidence type="ECO:0000255" key="3">
    <source>
        <dbReference type="PROSITE-ProRule" id="PRU00170"/>
    </source>
</evidence>
<evidence type="ECO:0000256" key="4">
    <source>
        <dbReference type="SAM" id="MobiDB-lite"/>
    </source>
</evidence>
<evidence type="ECO:0000303" key="5">
    <source>
    </source>
</evidence>
<evidence type="ECO:0000303" key="6">
    <source>
    </source>
</evidence>
<evidence type="ECO:0000305" key="7"/>
<accession>Q6DR04</accession>
<accession>Q84X51</accession>
<accession>Q84X52</accession>
<accession>Q9SIV1</accession>
<gene>
    <name type="primary">RTNLB17</name>
    <name type="ordered locus">At2g20590</name>
    <name type="ORF">F23N11.9</name>
</gene>
<name>RTNLQ_ARATH</name>
<keyword id="KW-0025">Alternative splicing</keyword>
<keyword id="KW-0256">Endoplasmic reticulum</keyword>
<keyword id="KW-0472">Membrane</keyword>
<keyword id="KW-1185">Reference proteome</keyword>
<keyword id="KW-0812">Transmembrane</keyword>
<keyword id="KW-1133">Transmembrane helix</keyword>
<feature type="chain" id="PRO_0000371298" description="Reticulon-like protein B17">
    <location>
        <begin position="1"/>
        <end position="431"/>
    </location>
</feature>
<feature type="transmembrane region" description="Helical" evidence="2">
    <location>
        <begin position="177"/>
        <end position="197"/>
    </location>
</feature>
<feature type="transmembrane region" description="Helical" evidence="2">
    <location>
        <begin position="202"/>
        <end position="222"/>
    </location>
</feature>
<feature type="transmembrane region" description="Helical" evidence="2">
    <location>
        <begin position="286"/>
        <end position="306"/>
    </location>
</feature>
<feature type="transmembrane region" description="Helical" evidence="2">
    <location>
        <begin position="349"/>
        <end position="369"/>
    </location>
</feature>
<feature type="domain" description="Reticulon" evidence="3">
    <location>
        <begin position="168"/>
        <end position="355"/>
    </location>
</feature>
<feature type="region of interest" description="Disordered" evidence="4">
    <location>
        <begin position="1"/>
        <end position="110"/>
    </location>
</feature>
<feature type="region of interest" description="Disordered" evidence="4">
    <location>
        <begin position="126"/>
        <end position="152"/>
    </location>
</feature>
<feature type="region of interest" description="Disordered" evidence="4">
    <location>
        <begin position="382"/>
        <end position="422"/>
    </location>
</feature>
<feature type="compositionally biased region" description="Polar residues" evidence="4">
    <location>
        <begin position="12"/>
        <end position="26"/>
    </location>
</feature>
<feature type="compositionally biased region" description="Basic residues" evidence="4">
    <location>
        <begin position="126"/>
        <end position="138"/>
    </location>
</feature>
<feature type="compositionally biased region" description="Polar residues" evidence="4">
    <location>
        <begin position="142"/>
        <end position="152"/>
    </location>
</feature>
<feature type="compositionally biased region" description="Acidic residues" evidence="4">
    <location>
        <begin position="382"/>
        <end position="415"/>
    </location>
</feature>
<feature type="splice variant" id="VSP_037012" description="In isoform 2." evidence="5 6">
    <original>VER</original>
    <variation>GEE</variation>
    <location>
        <begin position="321"/>
        <end position="323"/>
    </location>
</feature>
<feature type="splice variant" id="VSP_037013" description="In isoform 2." evidence="5 6">
    <location>
        <begin position="324"/>
        <end position="431"/>
    </location>
</feature>
<feature type="sequence conflict" description="In Ref. 3; AAO37135/AAO37136." evidence="7" ref="3">
    <original>R</original>
    <variation>I</variation>
    <location>
        <position position="128"/>
    </location>
</feature>
<protein>
    <recommendedName>
        <fullName>Reticulon-like protein B17</fullName>
        <shortName>AtRTNLB17</shortName>
    </recommendedName>
</protein>
<comment type="subcellular location">
    <subcellularLocation>
        <location evidence="1">Endoplasmic reticulum membrane</location>
        <topology evidence="1">Multi-pass membrane protein</topology>
    </subcellularLocation>
</comment>
<comment type="alternative products">
    <event type="alternative splicing"/>
    <isoform>
        <id>Q6DR04-1</id>
        <name>1</name>
        <sequence type="displayed"/>
    </isoform>
    <isoform>
        <id>Q6DR04-2</id>
        <name>2</name>
        <sequence type="described" ref="VSP_037012 VSP_037013"/>
    </isoform>
</comment>
<comment type="miscellaneous">
    <molecule>Isoform 2</molecule>
    <text evidence="7">May be due to intron retention.</text>
</comment>
<comment type="sequence caution" evidence="7">
    <conflict type="erroneous gene model prediction">
        <sequence resource="EMBL-CDS" id="AAD21707"/>
    </conflict>
</comment>
<proteinExistence type="evidence at transcript level"/>
<sequence>MESTPPYHRSNTKSASRLQDSSNPPNLSLDLVLSSPNTPNPSSPVPLRDILLLPPSPLRKSRTRLSDRLEMTSEDAMAVVRKRGKGKGGQKSLLASPRNPRRSRRRSEAVEEKEANLVIEEIVKLPPRKRKTNGRPKKDKQSSAPPLCSSSDLPNTCQSDLNLIGEIISDLVMWRDVAKSTLWFGFGCLSFLSSCFAKGVNFSVFSAVSNLGLVLLCGSFLSNTLCQRKNEDTKRAFHVSEDDVLRSARRVLPATNFFISKTSELFSGEPSMTLKVTPFLLLGAEYGHLITLWRLSAFGFFLSFTIPKLYSCYTHQISQKVERVKTRIGEAWGVCSHKKILAGSAVTAFWNLTSIRTRIFAVFIILVIFRYRRQNLQLTPEEVEPVENEQEEETLPQEEETVPQEEETVPQEEEQTQPSEERALVVVVAET</sequence>
<dbReference type="EMBL" id="AC007048">
    <property type="protein sequence ID" value="AAD21707.1"/>
    <property type="status" value="ALT_SEQ"/>
    <property type="molecule type" value="Genomic_DNA"/>
</dbReference>
<dbReference type="EMBL" id="CP002685">
    <property type="protein sequence ID" value="AEC07036.1"/>
    <property type="molecule type" value="Genomic_DNA"/>
</dbReference>
<dbReference type="EMBL" id="CP002685">
    <property type="protein sequence ID" value="AEC07037.1"/>
    <property type="molecule type" value="Genomic_DNA"/>
</dbReference>
<dbReference type="EMBL" id="AY219045">
    <property type="protein sequence ID" value="AAO37135.1"/>
    <property type="molecule type" value="mRNA"/>
</dbReference>
<dbReference type="EMBL" id="AY219046">
    <property type="protein sequence ID" value="AAO37136.1"/>
    <property type="molecule type" value="mRNA"/>
</dbReference>
<dbReference type="EMBL" id="AY649311">
    <property type="protein sequence ID" value="AAT69228.1"/>
    <property type="molecule type" value="mRNA"/>
</dbReference>
<dbReference type="PIR" id="B84591">
    <property type="entry name" value="B84591"/>
</dbReference>
<dbReference type="RefSeq" id="NP_179649.2">
    <molecule id="Q6DR04-1"/>
    <property type="nucleotide sequence ID" value="NM_127620.4"/>
</dbReference>
<dbReference type="RefSeq" id="NP_973488.1">
    <molecule id="Q6DR04-2"/>
    <property type="nucleotide sequence ID" value="NM_201759.3"/>
</dbReference>
<dbReference type="FunCoup" id="Q6DR04">
    <property type="interactions" value="241"/>
</dbReference>
<dbReference type="STRING" id="3702.Q6DR04"/>
<dbReference type="iPTMnet" id="Q6DR04"/>
<dbReference type="PaxDb" id="3702-AT2G20590.1"/>
<dbReference type="EnsemblPlants" id="AT2G20590.1">
    <molecule id="Q6DR04-1"/>
    <property type="protein sequence ID" value="AT2G20590.1"/>
    <property type="gene ID" value="AT2G20590"/>
</dbReference>
<dbReference type="EnsemblPlants" id="AT2G20590.2">
    <molecule id="Q6DR04-2"/>
    <property type="protein sequence ID" value="AT2G20590.2"/>
    <property type="gene ID" value="AT2G20590"/>
</dbReference>
<dbReference type="GeneID" id="816582"/>
<dbReference type="Gramene" id="AT2G20590.1">
    <molecule id="Q6DR04-1"/>
    <property type="protein sequence ID" value="AT2G20590.1"/>
    <property type="gene ID" value="AT2G20590"/>
</dbReference>
<dbReference type="Gramene" id="AT2G20590.2">
    <molecule id="Q6DR04-2"/>
    <property type="protein sequence ID" value="AT2G20590.2"/>
    <property type="gene ID" value="AT2G20590"/>
</dbReference>
<dbReference type="KEGG" id="ath:AT2G20590"/>
<dbReference type="Araport" id="AT2G20590"/>
<dbReference type="TAIR" id="AT2G20590">
    <property type="gene designation" value="RTN17"/>
</dbReference>
<dbReference type="eggNOG" id="ENOG502QU5C">
    <property type="taxonomic scope" value="Eukaryota"/>
</dbReference>
<dbReference type="InParanoid" id="Q6DR04"/>
<dbReference type="PhylomeDB" id="Q6DR04"/>
<dbReference type="PRO" id="PR:Q6DR04"/>
<dbReference type="Proteomes" id="UP000006548">
    <property type="component" value="Chromosome 2"/>
</dbReference>
<dbReference type="ExpressionAtlas" id="Q6DR04">
    <property type="expression patterns" value="baseline and differential"/>
</dbReference>
<dbReference type="GO" id="GO:0005789">
    <property type="term" value="C:endoplasmic reticulum membrane"/>
    <property type="evidence" value="ECO:0007669"/>
    <property type="project" value="UniProtKB-SubCell"/>
</dbReference>
<dbReference type="InterPro" id="IPR003388">
    <property type="entry name" value="Reticulon"/>
</dbReference>
<dbReference type="InterPro" id="IPR044647">
    <property type="entry name" value="RTNLB17/18/21"/>
</dbReference>
<dbReference type="PANTHER" id="PTHR46626">
    <property type="entry name" value="RETICULON-LIKE PROTEIN B17"/>
    <property type="match status" value="1"/>
</dbReference>
<dbReference type="PANTHER" id="PTHR46626:SF2">
    <property type="entry name" value="RETICULON-LIKE PROTEIN B17"/>
    <property type="match status" value="1"/>
</dbReference>
<dbReference type="Pfam" id="PF02453">
    <property type="entry name" value="Reticulon"/>
    <property type="match status" value="1"/>
</dbReference>
<dbReference type="PROSITE" id="PS50845">
    <property type="entry name" value="RETICULON"/>
    <property type="match status" value="1"/>
</dbReference>
<organism>
    <name type="scientific">Arabidopsis thaliana</name>
    <name type="common">Mouse-ear cress</name>
    <dbReference type="NCBI Taxonomy" id="3702"/>
    <lineage>
        <taxon>Eukaryota</taxon>
        <taxon>Viridiplantae</taxon>
        <taxon>Streptophyta</taxon>
        <taxon>Embryophyta</taxon>
        <taxon>Tracheophyta</taxon>
        <taxon>Spermatophyta</taxon>
        <taxon>Magnoliopsida</taxon>
        <taxon>eudicotyledons</taxon>
        <taxon>Gunneridae</taxon>
        <taxon>Pentapetalae</taxon>
        <taxon>rosids</taxon>
        <taxon>malvids</taxon>
        <taxon>Brassicales</taxon>
        <taxon>Brassicaceae</taxon>
        <taxon>Camelineae</taxon>
        <taxon>Arabidopsis</taxon>
    </lineage>
</organism>